<evidence type="ECO:0000255" key="1">
    <source>
        <dbReference type="HAMAP-Rule" id="MF_00382"/>
    </source>
</evidence>
<evidence type="ECO:0000305" key="2"/>
<reference key="1">
    <citation type="journal article" date="2011" name="J. Bacteriol.">
        <title>Comparative genomics of 28 Salmonella enterica isolates: evidence for CRISPR-mediated adaptive sublineage evolution.</title>
        <authorList>
            <person name="Fricke W.F."/>
            <person name="Mammel M.K."/>
            <person name="McDermott P.F."/>
            <person name="Tartera C."/>
            <person name="White D.G."/>
            <person name="Leclerc J.E."/>
            <person name="Ravel J."/>
            <person name="Cebula T.A."/>
        </authorList>
    </citation>
    <scope>NUCLEOTIDE SEQUENCE [LARGE SCALE GENOMIC DNA]</scope>
    <source>
        <strain>SL483</strain>
    </source>
</reference>
<feature type="chain" id="PRO_1000122363" description="Large ribosomal subunit protein bL20">
    <location>
        <begin position="1"/>
        <end position="118"/>
    </location>
</feature>
<proteinExistence type="inferred from homology"/>
<keyword id="KW-0687">Ribonucleoprotein</keyword>
<keyword id="KW-0689">Ribosomal protein</keyword>
<keyword id="KW-0694">RNA-binding</keyword>
<keyword id="KW-0699">rRNA-binding</keyword>
<dbReference type="EMBL" id="CP001138">
    <property type="protein sequence ID" value="ACH51709.1"/>
    <property type="molecule type" value="Genomic_DNA"/>
</dbReference>
<dbReference type="RefSeq" id="WP_000124850.1">
    <property type="nucleotide sequence ID" value="NC_011149.1"/>
</dbReference>
<dbReference type="SMR" id="B5F7F9"/>
<dbReference type="GeneID" id="98388757"/>
<dbReference type="KEGG" id="sea:SeAg_B1837"/>
<dbReference type="HOGENOM" id="CLU_123265_0_1_6"/>
<dbReference type="Proteomes" id="UP000008819">
    <property type="component" value="Chromosome"/>
</dbReference>
<dbReference type="GO" id="GO:1990904">
    <property type="term" value="C:ribonucleoprotein complex"/>
    <property type="evidence" value="ECO:0007669"/>
    <property type="project" value="UniProtKB-KW"/>
</dbReference>
<dbReference type="GO" id="GO:0005840">
    <property type="term" value="C:ribosome"/>
    <property type="evidence" value="ECO:0007669"/>
    <property type="project" value="UniProtKB-KW"/>
</dbReference>
<dbReference type="GO" id="GO:0019843">
    <property type="term" value="F:rRNA binding"/>
    <property type="evidence" value="ECO:0007669"/>
    <property type="project" value="UniProtKB-UniRule"/>
</dbReference>
<dbReference type="GO" id="GO:0003735">
    <property type="term" value="F:structural constituent of ribosome"/>
    <property type="evidence" value="ECO:0007669"/>
    <property type="project" value="InterPro"/>
</dbReference>
<dbReference type="GO" id="GO:0000027">
    <property type="term" value="P:ribosomal large subunit assembly"/>
    <property type="evidence" value="ECO:0007669"/>
    <property type="project" value="UniProtKB-UniRule"/>
</dbReference>
<dbReference type="GO" id="GO:0006412">
    <property type="term" value="P:translation"/>
    <property type="evidence" value="ECO:0007669"/>
    <property type="project" value="InterPro"/>
</dbReference>
<dbReference type="CDD" id="cd07026">
    <property type="entry name" value="Ribosomal_L20"/>
    <property type="match status" value="1"/>
</dbReference>
<dbReference type="FunFam" id="1.10.1900.20:FF:000001">
    <property type="entry name" value="50S ribosomal protein L20"/>
    <property type="match status" value="1"/>
</dbReference>
<dbReference type="Gene3D" id="6.10.160.10">
    <property type="match status" value="1"/>
</dbReference>
<dbReference type="Gene3D" id="1.10.1900.20">
    <property type="entry name" value="Ribosomal protein L20"/>
    <property type="match status" value="1"/>
</dbReference>
<dbReference type="HAMAP" id="MF_00382">
    <property type="entry name" value="Ribosomal_bL20"/>
    <property type="match status" value="1"/>
</dbReference>
<dbReference type="InterPro" id="IPR005813">
    <property type="entry name" value="Ribosomal_bL20"/>
</dbReference>
<dbReference type="InterPro" id="IPR049946">
    <property type="entry name" value="RIBOSOMAL_L20_CS"/>
</dbReference>
<dbReference type="InterPro" id="IPR035566">
    <property type="entry name" value="Ribosomal_protein_bL20_C"/>
</dbReference>
<dbReference type="NCBIfam" id="TIGR01032">
    <property type="entry name" value="rplT_bact"/>
    <property type="match status" value="1"/>
</dbReference>
<dbReference type="PANTHER" id="PTHR10986">
    <property type="entry name" value="39S RIBOSOMAL PROTEIN L20"/>
    <property type="match status" value="1"/>
</dbReference>
<dbReference type="Pfam" id="PF00453">
    <property type="entry name" value="Ribosomal_L20"/>
    <property type="match status" value="1"/>
</dbReference>
<dbReference type="PRINTS" id="PR00062">
    <property type="entry name" value="RIBOSOMALL20"/>
</dbReference>
<dbReference type="SUPFAM" id="SSF74731">
    <property type="entry name" value="Ribosomal protein L20"/>
    <property type="match status" value="1"/>
</dbReference>
<dbReference type="PROSITE" id="PS00937">
    <property type="entry name" value="RIBOSOMAL_L20"/>
    <property type="match status" value="1"/>
</dbReference>
<organism>
    <name type="scientific">Salmonella agona (strain SL483)</name>
    <dbReference type="NCBI Taxonomy" id="454166"/>
    <lineage>
        <taxon>Bacteria</taxon>
        <taxon>Pseudomonadati</taxon>
        <taxon>Pseudomonadota</taxon>
        <taxon>Gammaproteobacteria</taxon>
        <taxon>Enterobacterales</taxon>
        <taxon>Enterobacteriaceae</taxon>
        <taxon>Salmonella</taxon>
    </lineage>
</organism>
<accession>B5F7F9</accession>
<sequence>MARVKRGVIARARHKKILKQAKGYYGARSRVYRVAFQAVIKAGQYAYRDRRQRKRQFRQLWIARINAAARQNGISYSKFINGLKKASVEIDRKILADIAVFDKVAFTALVEKAKAALA</sequence>
<comment type="function">
    <text evidence="1">Binds directly to 23S ribosomal RNA and is necessary for the in vitro assembly process of the 50S ribosomal subunit. It is not involved in the protein synthesizing functions of that subunit.</text>
</comment>
<comment type="similarity">
    <text evidence="1">Belongs to the bacterial ribosomal protein bL20 family.</text>
</comment>
<gene>
    <name evidence="1" type="primary">rplT</name>
    <name type="ordered locus">SeAg_B1837</name>
</gene>
<protein>
    <recommendedName>
        <fullName evidence="1">Large ribosomal subunit protein bL20</fullName>
    </recommendedName>
    <alternativeName>
        <fullName evidence="2">50S ribosomal protein L20</fullName>
    </alternativeName>
</protein>
<name>RL20_SALA4</name>